<evidence type="ECO:0000255" key="1">
    <source>
        <dbReference type="HAMAP-Rule" id="MF_00651"/>
    </source>
</evidence>
<name>YQGF_GEOKA</name>
<gene>
    <name type="ordered locus">GK2554</name>
</gene>
<comment type="function">
    <text evidence="1">Could be a nuclease involved in processing of the 5'-end of pre-16S rRNA.</text>
</comment>
<comment type="subcellular location">
    <subcellularLocation>
        <location evidence="1">Cytoplasm</location>
    </subcellularLocation>
</comment>
<comment type="similarity">
    <text evidence="1">Belongs to the YqgF nuclease family.</text>
</comment>
<proteinExistence type="inferred from homology"/>
<sequence length="138" mass="15266">MRTLGLDLGTKTLGVAVSDELGLTAQGLETIAIDTERGDYGLKRLRAIIDEYGVDTIVVGWPKNMNGTLGPRAEASERFAAKLREEFSLPVVLWDERLSTMAAERMLIAADVSRKKRRKVIDKMAAAVILQSYLDSKR</sequence>
<dbReference type="EC" id="3.1.-.-" evidence="1"/>
<dbReference type="EMBL" id="BA000043">
    <property type="protein sequence ID" value="BAD76839.1"/>
    <property type="molecule type" value="Genomic_DNA"/>
</dbReference>
<dbReference type="SMR" id="Q5KWU7"/>
<dbReference type="STRING" id="235909.GK2554"/>
<dbReference type="KEGG" id="gka:GK2554"/>
<dbReference type="eggNOG" id="COG0816">
    <property type="taxonomic scope" value="Bacteria"/>
</dbReference>
<dbReference type="HOGENOM" id="CLU_098240_2_0_9"/>
<dbReference type="Proteomes" id="UP000001172">
    <property type="component" value="Chromosome"/>
</dbReference>
<dbReference type="GO" id="GO:0005829">
    <property type="term" value="C:cytosol"/>
    <property type="evidence" value="ECO:0007669"/>
    <property type="project" value="TreeGrafter"/>
</dbReference>
<dbReference type="GO" id="GO:0004518">
    <property type="term" value="F:nuclease activity"/>
    <property type="evidence" value="ECO:0007669"/>
    <property type="project" value="UniProtKB-KW"/>
</dbReference>
<dbReference type="GO" id="GO:0000967">
    <property type="term" value="P:rRNA 5'-end processing"/>
    <property type="evidence" value="ECO:0007669"/>
    <property type="project" value="UniProtKB-UniRule"/>
</dbReference>
<dbReference type="CDD" id="cd16964">
    <property type="entry name" value="YqgF"/>
    <property type="match status" value="1"/>
</dbReference>
<dbReference type="FunFam" id="3.30.420.140:FF:000003">
    <property type="entry name" value="Putative pre-16S rRNA nuclease"/>
    <property type="match status" value="1"/>
</dbReference>
<dbReference type="Gene3D" id="3.30.420.140">
    <property type="entry name" value="YqgF/RNase H-like domain"/>
    <property type="match status" value="1"/>
</dbReference>
<dbReference type="HAMAP" id="MF_00651">
    <property type="entry name" value="Nuclease_YqgF"/>
    <property type="match status" value="1"/>
</dbReference>
<dbReference type="InterPro" id="IPR012337">
    <property type="entry name" value="RNaseH-like_sf"/>
</dbReference>
<dbReference type="InterPro" id="IPR005227">
    <property type="entry name" value="YqgF"/>
</dbReference>
<dbReference type="InterPro" id="IPR006641">
    <property type="entry name" value="YqgF/RNaseH-like_dom"/>
</dbReference>
<dbReference type="InterPro" id="IPR037027">
    <property type="entry name" value="YqgF/RNaseH-like_dom_sf"/>
</dbReference>
<dbReference type="NCBIfam" id="TIGR00250">
    <property type="entry name" value="RNAse_H_YqgF"/>
    <property type="match status" value="1"/>
</dbReference>
<dbReference type="PANTHER" id="PTHR33317">
    <property type="entry name" value="POLYNUCLEOTIDYL TRANSFERASE, RIBONUCLEASE H-LIKE SUPERFAMILY PROTEIN"/>
    <property type="match status" value="1"/>
</dbReference>
<dbReference type="PANTHER" id="PTHR33317:SF4">
    <property type="entry name" value="POLYNUCLEOTIDYL TRANSFERASE, RIBONUCLEASE H-LIKE SUPERFAMILY PROTEIN"/>
    <property type="match status" value="1"/>
</dbReference>
<dbReference type="Pfam" id="PF03652">
    <property type="entry name" value="RuvX"/>
    <property type="match status" value="1"/>
</dbReference>
<dbReference type="SMART" id="SM00732">
    <property type="entry name" value="YqgFc"/>
    <property type="match status" value="1"/>
</dbReference>
<dbReference type="SUPFAM" id="SSF53098">
    <property type="entry name" value="Ribonuclease H-like"/>
    <property type="match status" value="1"/>
</dbReference>
<organism>
    <name type="scientific">Geobacillus kaustophilus (strain HTA426)</name>
    <dbReference type="NCBI Taxonomy" id="235909"/>
    <lineage>
        <taxon>Bacteria</taxon>
        <taxon>Bacillati</taxon>
        <taxon>Bacillota</taxon>
        <taxon>Bacilli</taxon>
        <taxon>Bacillales</taxon>
        <taxon>Anoxybacillaceae</taxon>
        <taxon>Geobacillus</taxon>
        <taxon>Geobacillus thermoleovorans group</taxon>
    </lineage>
</organism>
<accession>Q5KWU7</accession>
<reference key="1">
    <citation type="journal article" date="2004" name="Nucleic Acids Res.">
        <title>Thermoadaptation trait revealed by the genome sequence of thermophilic Geobacillus kaustophilus.</title>
        <authorList>
            <person name="Takami H."/>
            <person name="Takaki Y."/>
            <person name="Chee G.-J."/>
            <person name="Nishi S."/>
            <person name="Shimamura S."/>
            <person name="Suzuki H."/>
            <person name="Matsui S."/>
            <person name="Uchiyama I."/>
        </authorList>
    </citation>
    <scope>NUCLEOTIDE SEQUENCE [LARGE SCALE GENOMIC DNA]</scope>
    <source>
        <strain>HTA426</strain>
    </source>
</reference>
<keyword id="KW-0963">Cytoplasm</keyword>
<keyword id="KW-0378">Hydrolase</keyword>
<keyword id="KW-0540">Nuclease</keyword>
<keyword id="KW-1185">Reference proteome</keyword>
<keyword id="KW-0690">Ribosome biogenesis</keyword>
<protein>
    <recommendedName>
        <fullName evidence="1">Putative pre-16S rRNA nuclease</fullName>
        <ecNumber evidence="1">3.1.-.-</ecNumber>
    </recommendedName>
</protein>
<feature type="chain" id="PRO_0000172067" description="Putative pre-16S rRNA nuclease">
    <location>
        <begin position="1"/>
        <end position="138"/>
    </location>
</feature>